<gene>
    <name evidence="1" type="primary">rpsR</name>
    <name type="ordered locus">CBO3626</name>
    <name type="ordered locus">CLC_3625</name>
</gene>
<name>RS18_CLOBH</name>
<reference key="1">
    <citation type="journal article" date="2007" name="Genome Res.">
        <title>Genome sequence of a proteolytic (Group I) Clostridium botulinum strain Hall A and comparative analysis of the clostridial genomes.</title>
        <authorList>
            <person name="Sebaihia M."/>
            <person name="Peck M.W."/>
            <person name="Minton N.P."/>
            <person name="Thomson N.R."/>
            <person name="Holden M.T.G."/>
            <person name="Mitchell W.J."/>
            <person name="Carter A.T."/>
            <person name="Bentley S.D."/>
            <person name="Mason D.R."/>
            <person name="Crossman L."/>
            <person name="Paul C.J."/>
            <person name="Ivens A."/>
            <person name="Wells-Bennik M.H.J."/>
            <person name="Davis I.J."/>
            <person name="Cerdeno-Tarraga A.M."/>
            <person name="Churcher C."/>
            <person name="Quail M.A."/>
            <person name="Chillingworth T."/>
            <person name="Feltwell T."/>
            <person name="Fraser A."/>
            <person name="Goodhead I."/>
            <person name="Hance Z."/>
            <person name="Jagels K."/>
            <person name="Larke N."/>
            <person name="Maddison M."/>
            <person name="Moule S."/>
            <person name="Mungall K."/>
            <person name="Norbertczak H."/>
            <person name="Rabbinowitsch E."/>
            <person name="Sanders M."/>
            <person name="Simmonds M."/>
            <person name="White B."/>
            <person name="Whithead S."/>
            <person name="Parkhill J."/>
        </authorList>
    </citation>
    <scope>NUCLEOTIDE SEQUENCE [LARGE SCALE GENOMIC DNA]</scope>
    <source>
        <strain>Hall / ATCC 3502 / NCTC 13319 / Type A</strain>
    </source>
</reference>
<reference key="2">
    <citation type="journal article" date="2007" name="PLoS ONE">
        <title>Analysis of the neurotoxin complex genes in Clostridium botulinum A1-A4 and B1 strains: BoNT/A3, /Ba4 and /B1 clusters are located within plasmids.</title>
        <authorList>
            <person name="Smith T.J."/>
            <person name="Hill K.K."/>
            <person name="Foley B.T."/>
            <person name="Detter J.C."/>
            <person name="Munk A.C."/>
            <person name="Bruce D.C."/>
            <person name="Doggett N.A."/>
            <person name="Smith L.A."/>
            <person name="Marks J.D."/>
            <person name="Xie G."/>
            <person name="Brettin T.S."/>
        </authorList>
    </citation>
    <scope>NUCLEOTIDE SEQUENCE [LARGE SCALE GENOMIC DNA]</scope>
    <source>
        <strain>Hall / ATCC 3502 / NCTC 13319 / Type A</strain>
    </source>
</reference>
<sequence>MAGREGGRRQRRTKRKVCTFCAEKSEAIDYKDINKLRKFVTERGKILPRRISGNCAKHQRELTRAIKRARNIALLPFTTE</sequence>
<feature type="chain" id="PRO_1000003483" description="Small ribosomal subunit protein bS18">
    <location>
        <begin position="1"/>
        <end position="80"/>
    </location>
</feature>
<proteinExistence type="inferred from homology"/>
<keyword id="KW-1185">Reference proteome</keyword>
<keyword id="KW-0687">Ribonucleoprotein</keyword>
<keyword id="KW-0689">Ribosomal protein</keyword>
<keyword id="KW-0694">RNA-binding</keyword>
<keyword id="KW-0699">rRNA-binding</keyword>
<accession>A5I7Z9</accession>
<accession>A7G982</accession>
<organism>
    <name type="scientific">Clostridium botulinum (strain Hall / ATCC 3502 / NCTC 13319 / Type A)</name>
    <dbReference type="NCBI Taxonomy" id="441771"/>
    <lineage>
        <taxon>Bacteria</taxon>
        <taxon>Bacillati</taxon>
        <taxon>Bacillota</taxon>
        <taxon>Clostridia</taxon>
        <taxon>Eubacteriales</taxon>
        <taxon>Clostridiaceae</taxon>
        <taxon>Clostridium</taxon>
    </lineage>
</organism>
<dbReference type="EMBL" id="CP000727">
    <property type="protein sequence ID" value="ABS35890.1"/>
    <property type="molecule type" value="Genomic_DNA"/>
</dbReference>
<dbReference type="EMBL" id="AM412317">
    <property type="protein sequence ID" value="CAL85184.1"/>
    <property type="molecule type" value="Genomic_DNA"/>
</dbReference>
<dbReference type="RefSeq" id="WP_003359407.1">
    <property type="nucleotide sequence ID" value="NC_009698.1"/>
</dbReference>
<dbReference type="RefSeq" id="YP_001256104.1">
    <property type="nucleotide sequence ID" value="NC_009495.1"/>
</dbReference>
<dbReference type="RefSeq" id="YP_001389347.1">
    <property type="nucleotide sequence ID" value="NC_009698.1"/>
</dbReference>
<dbReference type="SMR" id="A5I7Z9"/>
<dbReference type="GeneID" id="5188014"/>
<dbReference type="KEGG" id="cbh:CLC_3625"/>
<dbReference type="KEGG" id="cbo:CBO3626"/>
<dbReference type="PATRIC" id="fig|413999.7.peg.3602"/>
<dbReference type="HOGENOM" id="CLU_148710_2_2_9"/>
<dbReference type="PRO" id="PR:A5I7Z9"/>
<dbReference type="Proteomes" id="UP000001986">
    <property type="component" value="Chromosome"/>
</dbReference>
<dbReference type="GO" id="GO:0022627">
    <property type="term" value="C:cytosolic small ribosomal subunit"/>
    <property type="evidence" value="ECO:0000318"/>
    <property type="project" value="GO_Central"/>
</dbReference>
<dbReference type="GO" id="GO:0070181">
    <property type="term" value="F:small ribosomal subunit rRNA binding"/>
    <property type="evidence" value="ECO:0000318"/>
    <property type="project" value="GO_Central"/>
</dbReference>
<dbReference type="GO" id="GO:0003735">
    <property type="term" value="F:structural constituent of ribosome"/>
    <property type="evidence" value="ECO:0000318"/>
    <property type="project" value="GO_Central"/>
</dbReference>
<dbReference type="GO" id="GO:0006412">
    <property type="term" value="P:translation"/>
    <property type="evidence" value="ECO:0000318"/>
    <property type="project" value="GO_Central"/>
</dbReference>
<dbReference type="FunFam" id="4.10.640.10:FF:000004">
    <property type="entry name" value="30S ribosomal protein S18"/>
    <property type="match status" value="1"/>
</dbReference>
<dbReference type="Gene3D" id="4.10.640.10">
    <property type="entry name" value="Ribosomal protein S18"/>
    <property type="match status" value="1"/>
</dbReference>
<dbReference type="HAMAP" id="MF_00270">
    <property type="entry name" value="Ribosomal_bS18"/>
    <property type="match status" value="1"/>
</dbReference>
<dbReference type="InterPro" id="IPR001648">
    <property type="entry name" value="Ribosomal_bS18"/>
</dbReference>
<dbReference type="InterPro" id="IPR018275">
    <property type="entry name" value="Ribosomal_bS18_CS"/>
</dbReference>
<dbReference type="InterPro" id="IPR036870">
    <property type="entry name" value="Ribosomal_bS18_sf"/>
</dbReference>
<dbReference type="NCBIfam" id="TIGR00165">
    <property type="entry name" value="S18"/>
    <property type="match status" value="1"/>
</dbReference>
<dbReference type="PANTHER" id="PTHR13479">
    <property type="entry name" value="30S RIBOSOMAL PROTEIN S18"/>
    <property type="match status" value="1"/>
</dbReference>
<dbReference type="PANTHER" id="PTHR13479:SF40">
    <property type="entry name" value="SMALL RIBOSOMAL SUBUNIT PROTEIN BS18M"/>
    <property type="match status" value="1"/>
</dbReference>
<dbReference type="Pfam" id="PF01084">
    <property type="entry name" value="Ribosomal_S18"/>
    <property type="match status" value="1"/>
</dbReference>
<dbReference type="PRINTS" id="PR00974">
    <property type="entry name" value="RIBOSOMALS18"/>
</dbReference>
<dbReference type="SUPFAM" id="SSF46911">
    <property type="entry name" value="Ribosomal protein S18"/>
    <property type="match status" value="1"/>
</dbReference>
<dbReference type="PROSITE" id="PS00057">
    <property type="entry name" value="RIBOSOMAL_S18"/>
    <property type="match status" value="1"/>
</dbReference>
<evidence type="ECO:0000255" key="1">
    <source>
        <dbReference type="HAMAP-Rule" id="MF_00270"/>
    </source>
</evidence>
<evidence type="ECO:0000305" key="2"/>
<comment type="function">
    <text evidence="1">Binds as a heterodimer with protein bS6 to the central domain of the 16S rRNA, where it helps stabilize the platform of the 30S subunit.</text>
</comment>
<comment type="subunit">
    <text evidence="1">Part of the 30S ribosomal subunit. Forms a tight heterodimer with protein bS6.</text>
</comment>
<comment type="similarity">
    <text evidence="1">Belongs to the bacterial ribosomal protein bS18 family.</text>
</comment>
<protein>
    <recommendedName>
        <fullName evidence="1">Small ribosomal subunit protein bS18</fullName>
    </recommendedName>
    <alternativeName>
        <fullName evidence="2">30S ribosomal protein S18</fullName>
    </alternativeName>
</protein>